<feature type="chain" id="PRO_0000402554" description="Probable carboxylesterase 8">
    <location>
        <begin position="1"/>
        <end position="329"/>
    </location>
</feature>
<feature type="short sequence motif" description="Involved in the stabilization of the negatively charged intermediate by the formation of the oxyanion hole" evidence="2">
    <location>
        <begin position="73"/>
        <end position="75"/>
    </location>
</feature>
<feature type="active site" evidence="2">
    <location>
        <position position="161"/>
    </location>
</feature>
<feature type="active site" evidence="2">
    <location>
        <position position="264"/>
    </location>
</feature>
<feature type="active site" evidence="2">
    <location>
        <position position="294"/>
    </location>
</feature>
<feature type="sequence conflict" description="In Ref. 5; AAM65132." evidence="4" ref="5">
    <original>D</original>
    <variation>Y</variation>
    <location>
        <position position="208"/>
    </location>
</feature>
<protein>
    <recommendedName>
        <fullName>Probable carboxylesterase 8</fullName>
    </recommendedName>
    <alternativeName>
        <fullName>AtCXE8</fullName>
        <ecNumber>3.1.1.1</ecNumber>
    </alternativeName>
</protein>
<sequence length="329" mass="36424">MEAPPPSSDPYKFLNITLNSDGSLTRHRDFPKLPPTEQSKDIPLNQTNNTFIRIFKPRNIPPESKLPILVYFHGGGFILYSAASAPFHESCTKMADRLQTIILSVEYRLAPEHRLPAAYEDAVEAILWLRDQARGPINGGDCDTWLKDGVDFSKCYVMGSSSGGNIVYNVALRVVDTDLSPVKIQGLIMNQAFFGGVEPSDSESRLKDDKICPLPATHLLWSLCLPDGVDRDHVYSNPIKSSGPQEKDKMGRFPSTLINGYGGDPLVDRQRHVAEMLKGRGVHVETRFDKDGFHACELFDGNKAKALYETVEAFMKSCSSTGPSSNSNM</sequence>
<organism>
    <name type="scientific">Arabidopsis thaliana</name>
    <name type="common">Mouse-ear cress</name>
    <dbReference type="NCBI Taxonomy" id="3702"/>
    <lineage>
        <taxon>Eukaryota</taxon>
        <taxon>Viridiplantae</taxon>
        <taxon>Streptophyta</taxon>
        <taxon>Embryophyta</taxon>
        <taxon>Tracheophyta</taxon>
        <taxon>Spermatophyta</taxon>
        <taxon>Magnoliopsida</taxon>
        <taxon>eudicotyledons</taxon>
        <taxon>Gunneridae</taxon>
        <taxon>Pentapetalae</taxon>
        <taxon>rosids</taxon>
        <taxon>malvids</taxon>
        <taxon>Brassicales</taxon>
        <taxon>Brassicaceae</taxon>
        <taxon>Camelineae</taxon>
        <taxon>Arabidopsis</taxon>
    </lineage>
</organism>
<dbReference type="EC" id="3.1.1.1"/>
<dbReference type="EMBL" id="AC003680">
    <property type="protein sequence ID" value="AAC06164.1"/>
    <property type="molecule type" value="Genomic_DNA"/>
</dbReference>
<dbReference type="EMBL" id="CP002685">
    <property type="protein sequence ID" value="AEC10575.1"/>
    <property type="molecule type" value="Genomic_DNA"/>
</dbReference>
<dbReference type="EMBL" id="AY058862">
    <property type="protein sequence ID" value="AAL24249.1"/>
    <property type="molecule type" value="mRNA"/>
</dbReference>
<dbReference type="EMBL" id="BT020409">
    <property type="protein sequence ID" value="AAV97800.1"/>
    <property type="molecule type" value="mRNA"/>
</dbReference>
<dbReference type="EMBL" id="AY087590">
    <property type="protein sequence ID" value="AAM65132.1"/>
    <property type="molecule type" value="mRNA"/>
</dbReference>
<dbReference type="PIR" id="T00873">
    <property type="entry name" value="T00873"/>
</dbReference>
<dbReference type="RefSeq" id="NP_566047.1">
    <property type="nucleotide sequence ID" value="NM_130122.3"/>
</dbReference>
<dbReference type="SMR" id="O64640"/>
<dbReference type="FunCoup" id="O64640">
    <property type="interactions" value="203"/>
</dbReference>
<dbReference type="STRING" id="3702.O64640"/>
<dbReference type="ESTHER" id="arath-CXE8">
    <property type="family name" value="Plant_carboxylesterase"/>
</dbReference>
<dbReference type="MEROPS" id="S09.A07"/>
<dbReference type="iPTMnet" id="O64640"/>
<dbReference type="PaxDb" id="3702-AT2G45600.1"/>
<dbReference type="ProteomicsDB" id="220329"/>
<dbReference type="EnsemblPlants" id="AT2G45600.1">
    <property type="protein sequence ID" value="AT2G45600.1"/>
    <property type="gene ID" value="AT2G45600"/>
</dbReference>
<dbReference type="GeneID" id="819168"/>
<dbReference type="Gramene" id="AT2G45600.1">
    <property type="protein sequence ID" value="AT2G45600.1"/>
    <property type="gene ID" value="AT2G45600"/>
</dbReference>
<dbReference type="KEGG" id="ath:AT2G45600"/>
<dbReference type="Araport" id="AT2G45600"/>
<dbReference type="TAIR" id="AT2G45600"/>
<dbReference type="eggNOG" id="KOG1515">
    <property type="taxonomic scope" value="Eukaryota"/>
</dbReference>
<dbReference type="HOGENOM" id="CLU_012494_22_1_1"/>
<dbReference type="InParanoid" id="O64640"/>
<dbReference type="OMA" id="FFHESCN"/>
<dbReference type="PhylomeDB" id="O64640"/>
<dbReference type="BioCyc" id="ARA:AT2G45600-MONOMER"/>
<dbReference type="PRO" id="PR:O64640"/>
<dbReference type="Proteomes" id="UP000006548">
    <property type="component" value="Chromosome 2"/>
</dbReference>
<dbReference type="ExpressionAtlas" id="O64640">
    <property type="expression patterns" value="baseline and differential"/>
</dbReference>
<dbReference type="GO" id="GO:0106435">
    <property type="term" value="F:carboxylesterase activity"/>
    <property type="evidence" value="ECO:0007669"/>
    <property type="project" value="UniProtKB-EC"/>
</dbReference>
<dbReference type="Gene3D" id="3.40.50.1820">
    <property type="entry name" value="alpha/beta hydrolase"/>
    <property type="match status" value="1"/>
</dbReference>
<dbReference type="InterPro" id="IPR013094">
    <property type="entry name" value="AB_hydrolase_3"/>
</dbReference>
<dbReference type="InterPro" id="IPR029058">
    <property type="entry name" value="AB_hydrolase_fold"/>
</dbReference>
<dbReference type="InterPro" id="IPR050466">
    <property type="entry name" value="Carboxylest/Gibb_receptor"/>
</dbReference>
<dbReference type="InterPro" id="IPR002168">
    <property type="entry name" value="Lipase_GDXG_HIS_AS"/>
</dbReference>
<dbReference type="PANTHER" id="PTHR23024">
    <property type="entry name" value="ARYLACETAMIDE DEACETYLASE"/>
    <property type="match status" value="1"/>
</dbReference>
<dbReference type="PANTHER" id="PTHR23024:SF113">
    <property type="entry name" value="CARBOXYLESTERASE 8-RELATED"/>
    <property type="match status" value="1"/>
</dbReference>
<dbReference type="Pfam" id="PF07859">
    <property type="entry name" value="Abhydrolase_3"/>
    <property type="match status" value="1"/>
</dbReference>
<dbReference type="SUPFAM" id="SSF53474">
    <property type="entry name" value="alpha/beta-Hydrolases"/>
    <property type="match status" value="1"/>
</dbReference>
<dbReference type="PROSITE" id="PS01173">
    <property type="entry name" value="LIPASE_GDXG_HIS"/>
    <property type="match status" value="1"/>
</dbReference>
<gene>
    <name type="primary">CXE8</name>
    <name type="ordered locus">At2g45600</name>
    <name type="ORF">17K2.13</name>
</gene>
<comment type="function">
    <text evidence="1">Carboxylesterase acting on esters with varying acyl chain length.</text>
</comment>
<comment type="catalytic activity">
    <reaction>
        <text>a carboxylic ester + H2O = an alcohol + a carboxylate + H(+)</text>
        <dbReference type="Rhea" id="RHEA:21164"/>
        <dbReference type="ChEBI" id="CHEBI:15377"/>
        <dbReference type="ChEBI" id="CHEBI:15378"/>
        <dbReference type="ChEBI" id="CHEBI:29067"/>
        <dbReference type="ChEBI" id="CHEBI:30879"/>
        <dbReference type="ChEBI" id="CHEBI:33308"/>
        <dbReference type="EC" id="3.1.1.1"/>
    </reaction>
</comment>
<comment type="tissue specificity">
    <text evidence="3">Expressed in leaves, stems, flowers and siliques.</text>
</comment>
<comment type="similarity">
    <text evidence="4">Belongs to the 'GDXG' lipolytic enzyme family.</text>
</comment>
<evidence type="ECO:0000250" key="1"/>
<evidence type="ECO:0000250" key="2">
    <source>
        <dbReference type="UniProtKB" id="Q5NUF3"/>
    </source>
</evidence>
<evidence type="ECO:0000269" key="3">
    <source>
    </source>
</evidence>
<evidence type="ECO:0000305" key="4"/>
<proteinExistence type="evidence at transcript level"/>
<accession>O64640</accession>
<accession>Q8LAV3</accession>
<keyword id="KW-0378">Hydrolase</keyword>
<keyword id="KW-1185">Reference proteome</keyword>
<keyword id="KW-0719">Serine esterase</keyword>
<reference key="1">
    <citation type="journal article" date="1999" name="Nature">
        <title>Sequence and analysis of chromosome 2 of the plant Arabidopsis thaliana.</title>
        <authorList>
            <person name="Lin X."/>
            <person name="Kaul S."/>
            <person name="Rounsley S.D."/>
            <person name="Shea T.P."/>
            <person name="Benito M.-I."/>
            <person name="Town C.D."/>
            <person name="Fujii C.Y."/>
            <person name="Mason T.M."/>
            <person name="Bowman C.L."/>
            <person name="Barnstead M.E."/>
            <person name="Feldblyum T.V."/>
            <person name="Buell C.R."/>
            <person name="Ketchum K.A."/>
            <person name="Lee J.J."/>
            <person name="Ronning C.M."/>
            <person name="Koo H.L."/>
            <person name="Moffat K.S."/>
            <person name="Cronin L.A."/>
            <person name="Shen M."/>
            <person name="Pai G."/>
            <person name="Van Aken S."/>
            <person name="Umayam L."/>
            <person name="Tallon L.J."/>
            <person name="Gill J.E."/>
            <person name="Adams M.D."/>
            <person name="Carrera A.J."/>
            <person name="Creasy T.H."/>
            <person name="Goodman H.M."/>
            <person name="Somerville C.R."/>
            <person name="Copenhaver G.P."/>
            <person name="Preuss D."/>
            <person name="Nierman W.C."/>
            <person name="White O."/>
            <person name="Eisen J.A."/>
            <person name="Salzberg S.L."/>
            <person name="Fraser C.M."/>
            <person name="Venter J.C."/>
        </authorList>
    </citation>
    <scope>NUCLEOTIDE SEQUENCE [LARGE SCALE GENOMIC DNA]</scope>
    <source>
        <strain>cv. Columbia</strain>
    </source>
</reference>
<reference key="2">
    <citation type="journal article" date="2017" name="Plant J.">
        <title>Araport11: a complete reannotation of the Arabidopsis thaliana reference genome.</title>
        <authorList>
            <person name="Cheng C.Y."/>
            <person name="Krishnakumar V."/>
            <person name="Chan A.P."/>
            <person name="Thibaud-Nissen F."/>
            <person name="Schobel S."/>
            <person name="Town C.D."/>
        </authorList>
    </citation>
    <scope>GENOME REANNOTATION</scope>
    <source>
        <strain>cv. Columbia</strain>
    </source>
</reference>
<reference key="3">
    <citation type="journal article" date="2003" name="Science">
        <title>Empirical analysis of transcriptional activity in the Arabidopsis genome.</title>
        <authorList>
            <person name="Yamada K."/>
            <person name="Lim J."/>
            <person name="Dale J.M."/>
            <person name="Chen H."/>
            <person name="Shinn P."/>
            <person name="Palm C.J."/>
            <person name="Southwick A.M."/>
            <person name="Wu H.C."/>
            <person name="Kim C.J."/>
            <person name="Nguyen M."/>
            <person name="Pham P.K."/>
            <person name="Cheuk R.F."/>
            <person name="Karlin-Newmann G."/>
            <person name="Liu S.X."/>
            <person name="Lam B."/>
            <person name="Sakano H."/>
            <person name="Wu T."/>
            <person name="Yu G."/>
            <person name="Miranda M."/>
            <person name="Quach H.L."/>
            <person name="Tripp M."/>
            <person name="Chang C.H."/>
            <person name="Lee J.M."/>
            <person name="Toriumi M.J."/>
            <person name="Chan M.M."/>
            <person name="Tang C.C."/>
            <person name="Onodera C.S."/>
            <person name="Deng J.M."/>
            <person name="Akiyama K."/>
            <person name="Ansari Y."/>
            <person name="Arakawa T."/>
            <person name="Banh J."/>
            <person name="Banno F."/>
            <person name="Bowser L."/>
            <person name="Brooks S.Y."/>
            <person name="Carninci P."/>
            <person name="Chao Q."/>
            <person name="Choy N."/>
            <person name="Enju A."/>
            <person name="Goldsmith A.D."/>
            <person name="Gurjal M."/>
            <person name="Hansen N.F."/>
            <person name="Hayashizaki Y."/>
            <person name="Johnson-Hopson C."/>
            <person name="Hsuan V.W."/>
            <person name="Iida K."/>
            <person name="Karnes M."/>
            <person name="Khan S."/>
            <person name="Koesema E."/>
            <person name="Ishida J."/>
            <person name="Jiang P.X."/>
            <person name="Jones T."/>
            <person name="Kawai J."/>
            <person name="Kamiya A."/>
            <person name="Meyers C."/>
            <person name="Nakajima M."/>
            <person name="Narusaka M."/>
            <person name="Seki M."/>
            <person name="Sakurai T."/>
            <person name="Satou M."/>
            <person name="Tamse R."/>
            <person name="Vaysberg M."/>
            <person name="Wallender E.K."/>
            <person name="Wong C."/>
            <person name="Yamamura Y."/>
            <person name="Yuan S."/>
            <person name="Shinozaki K."/>
            <person name="Davis R.W."/>
            <person name="Theologis A."/>
            <person name="Ecker J.R."/>
        </authorList>
    </citation>
    <scope>NUCLEOTIDE SEQUENCE [LARGE SCALE MRNA]</scope>
    <source>
        <strain>cv. Columbia</strain>
    </source>
</reference>
<reference key="4">
    <citation type="submission" date="2004-12" db="EMBL/GenBank/DDBJ databases">
        <title>Arabidopsis ORF clones.</title>
        <authorList>
            <person name="Shinn P."/>
            <person name="Chen H."/>
            <person name="Cheuk R.F."/>
            <person name="Kim C.J."/>
            <person name="Ecker J.R."/>
        </authorList>
    </citation>
    <scope>NUCLEOTIDE SEQUENCE [LARGE SCALE MRNA]</scope>
    <source>
        <strain>cv. Columbia</strain>
    </source>
</reference>
<reference key="5">
    <citation type="submission" date="2002-03" db="EMBL/GenBank/DDBJ databases">
        <title>Full-length cDNA from Arabidopsis thaliana.</title>
        <authorList>
            <person name="Brover V.V."/>
            <person name="Troukhan M.E."/>
            <person name="Alexandrov N.A."/>
            <person name="Lu Y.-P."/>
            <person name="Flavell R.B."/>
            <person name="Feldmann K.A."/>
        </authorList>
    </citation>
    <scope>NUCLEOTIDE SEQUENCE [LARGE SCALE MRNA]</scope>
</reference>
<reference key="6">
    <citation type="journal article" date="2003" name="J. Mol. Evol.">
        <title>The carboxylesterase gene family from Arabidopsis thaliana.</title>
        <authorList>
            <person name="Marshall S.D."/>
            <person name="Putterill J.J."/>
            <person name="Plummer K.M."/>
            <person name="Newcomb R.D."/>
        </authorList>
    </citation>
    <scope>TISSUE SPECIFICITY</scope>
    <scope>GENE FAMILY</scope>
    <scope>NOMENCLATURE</scope>
</reference>
<name>CXE8_ARATH</name>